<comment type="function">
    <text evidence="1">Catalyzes the formation of phosphatidylethanolamine (PtdEtn) from phosphatidylserine (PtdSer).</text>
</comment>
<comment type="catalytic activity">
    <reaction evidence="1">
        <text>a 1,2-diacyl-sn-glycero-3-phospho-L-serine + H(+) = a 1,2-diacyl-sn-glycero-3-phosphoethanolamine + CO2</text>
        <dbReference type="Rhea" id="RHEA:20828"/>
        <dbReference type="ChEBI" id="CHEBI:15378"/>
        <dbReference type="ChEBI" id="CHEBI:16526"/>
        <dbReference type="ChEBI" id="CHEBI:57262"/>
        <dbReference type="ChEBI" id="CHEBI:64612"/>
        <dbReference type="EC" id="4.1.1.65"/>
    </reaction>
</comment>
<comment type="cofactor">
    <cofactor evidence="1">
        <name>pyruvate</name>
        <dbReference type="ChEBI" id="CHEBI:15361"/>
    </cofactor>
    <text evidence="1">Binds 1 pyruvoyl group covalently per subunit.</text>
</comment>
<comment type="pathway">
    <text evidence="1">Phospholipid metabolism; phosphatidylethanolamine biosynthesis; phosphatidylethanolamine from CDP-diacylglycerol: step 2/2.</text>
</comment>
<comment type="subunit">
    <text evidence="1">Heterodimer of a large membrane-associated beta subunit and a small pyruvoyl-containing alpha subunit.</text>
</comment>
<comment type="subcellular location">
    <subcellularLocation>
        <location evidence="1">Cell membrane</location>
        <topology evidence="1">Peripheral membrane protein</topology>
    </subcellularLocation>
</comment>
<comment type="PTM">
    <text evidence="1">Is synthesized initially as an inactive proenzyme. Formation of the active enzyme involves a self-maturation process in which the active site pyruvoyl group is generated from an internal serine residue via an autocatalytic post-translational modification. Two non-identical subunits are generated from the proenzyme in this reaction, and the pyruvate is formed at the N-terminus of the alpha chain, which is derived from the carboxyl end of the proenzyme. The post-translation cleavage follows an unusual pathway, termed non-hydrolytic serinolysis, in which the side chain hydroxyl group of the serine supplies its oxygen atom to form the C-terminus of the beta chain, while the remainder of the serine residue undergoes an oxidative deamination to produce ammonia and the pyruvoyl prosthetic group on the alpha chain.</text>
</comment>
<comment type="similarity">
    <text evidence="1">Belongs to the phosphatidylserine decarboxylase family. PSD-A subfamily.</text>
</comment>
<accession>B1YTR9</accession>
<protein>
    <recommendedName>
        <fullName evidence="1">Phosphatidylserine decarboxylase proenzyme</fullName>
        <ecNumber evidence="1">4.1.1.65</ecNumber>
    </recommendedName>
    <component>
        <recommendedName>
            <fullName evidence="1">Phosphatidylserine decarboxylase alpha chain</fullName>
        </recommendedName>
    </component>
    <component>
        <recommendedName>
            <fullName evidence="1">Phosphatidylserine decarboxylase beta chain</fullName>
        </recommendedName>
    </component>
</protein>
<sequence length="214" mass="23474">MNYPHPIIAREGWPFIAIAAVIALLIHAVGGFGFAWPFWLLLVFVVQFFRDPQRPIPAQPNAVLCPADGRIVAVETTQDPYANREALKISVFMNVFNVHSQRSPVDGAVTKVEYFPGAFLNAAIDKASTENERNALVIQTASGKTVTAVQIAGLVARRILCYVRAGEPLSRGQRYGFIRFGSRVDVYLPLGSRAKVSIGEKVYASSTILAELEQ</sequence>
<feature type="chain" id="PRO_1000131444" description="Phosphatidylserine decarboxylase beta chain" evidence="1">
    <location>
        <begin position="1"/>
        <end position="181"/>
    </location>
</feature>
<feature type="chain" id="PRO_1000131445" description="Phosphatidylserine decarboxylase alpha chain" evidence="1">
    <location>
        <begin position="182"/>
        <end position="214"/>
    </location>
</feature>
<feature type="active site" description="Schiff-base intermediate with substrate; via pyruvic acid" evidence="1">
    <location>
        <position position="182"/>
    </location>
</feature>
<feature type="site" description="Cleavage (non-hydrolytic); by autocatalysis" evidence="1">
    <location>
        <begin position="181"/>
        <end position="182"/>
    </location>
</feature>
<feature type="modified residue" description="Pyruvic acid (Ser); by autocatalysis" evidence="1">
    <location>
        <position position="182"/>
    </location>
</feature>
<proteinExistence type="inferred from homology"/>
<name>PSD_BURA4</name>
<evidence type="ECO:0000255" key="1">
    <source>
        <dbReference type="HAMAP-Rule" id="MF_00664"/>
    </source>
</evidence>
<gene>
    <name evidence="1" type="primary">psd</name>
    <name type="ordered locus">BamMC406_2178</name>
</gene>
<keyword id="KW-1003">Cell membrane</keyword>
<keyword id="KW-0210">Decarboxylase</keyword>
<keyword id="KW-0444">Lipid biosynthesis</keyword>
<keyword id="KW-0443">Lipid metabolism</keyword>
<keyword id="KW-0456">Lyase</keyword>
<keyword id="KW-0472">Membrane</keyword>
<keyword id="KW-0594">Phospholipid biosynthesis</keyword>
<keyword id="KW-1208">Phospholipid metabolism</keyword>
<keyword id="KW-0670">Pyruvate</keyword>
<keyword id="KW-0865">Zymogen</keyword>
<reference key="1">
    <citation type="submission" date="2008-04" db="EMBL/GenBank/DDBJ databases">
        <title>Complete sequence of chromosome 1 of Burkholderia ambifaria MC40-6.</title>
        <authorList>
            <person name="Copeland A."/>
            <person name="Lucas S."/>
            <person name="Lapidus A."/>
            <person name="Glavina del Rio T."/>
            <person name="Dalin E."/>
            <person name="Tice H."/>
            <person name="Pitluck S."/>
            <person name="Chain P."/>
            <person name="Malfatti S."/>
            <person name="Shin M."/>
            <person name="Vergez L."/>
            <person name="Lang D."/>
            <person name="Schmutz J."/>
            <person name="Larimer F."/>
            <person name="Land M."/>
            <person name="Hauser L."/>
            <person name="Kyrpides N."/>
            <person name="Lykidis A."/>
            <person name="Ramette A."/>
            <person name="Konstantinidis K."/>
            <person name="Tiedje J."/>
            <person name="Richardson P."/>
        </authorList>
    </citation>
    <scope>NUCLEOTIDE SEQUENCE [LARGE SCALE GENOMIC DNA]</scope>
    <source>
        <strain>MC40-6</strain>
    </source>
</reference>
<dbReference type="EC" id="4.1.1.65" evidence="1"/>
<dbReference type="EMBL" id="CP001025">
    <property type="protein sequence ID" value="ACB64657.1"/>
    <property type="molecule type" value="Genomic_DNA"/>
</dbReference>
<dbReference type="RefSeq" id="WP_006750447.1">
    <property type="nucleotide sequence ID" value="NC_010551.1"/>
</dbReference>
<dbReference type="SMR" id="B1YTR9"/>
<dbReference type="KEGG" id="bac:BamMC406_2178"/>
<dbReference type="HOGENOM" id="CLU_072492_0_0_4"/>
<dbReference type="OrthoDB" id="9790893at2"/>
<dbReference type="UniPathway" id="UPA00558">
    <property type="reaction ID" value="UER00616"/>
</dbReference>
<dbReference type="Proteomes" id="UP000001680">
    <property type="component" value="Chromosome 1"/>
</dbReference>
<dbReference type="GO" id="GO:0005886">
    <property type="term" value="C:plasma membrane"/>
    <property type="evidence" value="ECO:0007669"/>
    <property type="project" value="UniProtKB-SubCell"/>
</dbReference>
<dbReference type="GO" id="GO:0004609">
    <property type="term" value="F:phosphatidylserine decarboxylase activity"/>
    <property type="evidence" value="ECO:0007669"/>
    <property type="project" value="UniProtKB-UniRule"/>
</dbReference>
<dbReference type="GO" id="GO:0006646">
    <property type="term" value="P:phosphatidylethanolamine biosynthetic process"/>
    <property type="evidence" value="ECO:0007669"/>
    <property type="project" value="UniProtKB-UniRule"/>
</dbReference>
<dbReference type="HAMAP" id="MF_00664">
    <property type="entry name" value="PS_decarb_PSD_A"/>
    <property type="match status" value="1"/>
</dbReference>
<dbReference type="InterPro" id="IPR003817">
    <property type="entry name" value="PS_Dcarbxylase"/>
</dbReference>
<dbReference type="InterPro" id="IPR033175">
    <property type="entry name" value="PSD-A"/>
</dbReference>
<dbReference type="NCBIfam" id="TIGR00164">
    <property type="entry name" value="AS_decarb"/>
    <property type="match status" value="1"/>
</dbReference>
<dbReference type="NCBIfam" id="NF003678">
    <property type="entry name" value="PRK05305.1-2"/>
    <property type="match status" value="1"/>
</dbReference>
<dbReference type="NCBIfam" id="NF003680">
    <property type="entry name" value="PRK05305.1-5"/>
    <property type="match status" value="1"/>
</dbReference>
<dbReference type="NCBIfam" id="NF003685">
    <property type="entry name" value="PRK05305.2-5"/>
    <property type="match status" value="1"/>
</dbReference>
<dbReference type="PANTHER" id="PTHR35809">
    <property type="entry name" value="ARCHAETIDYLSERINE DECARBOXYLASE PROENZYME-RELATED"/>
    <property type="match status" value="1"/>
</dbReference>
<dbReference type="PANTHER" id="PTHR35809:SF1">
    <property type="entry name" value="ARCHAETIDYLSERINE DECARBOXYLASE PROENZYME-RELATED"/>
    <property type="match status" value="1"/>
</dbReference>
<dbReference type="Pfam" id="PF02666">
    <property type="entry name" value="PS_Dcarbxylase"/>
    <property type="match status" value="1"/>
</dbReference>
<organism>
    <name type="scientific">Burkholderia ambifaria (strain MC40-6)</name>
    <dbReference type="NCBI Taxonomy" id="398577"/>
    <lineage>
        <taxon>Bacteria</taxon>
        <taxon>Pseudomonadati</taxon>
        <taxon>Pseudomonadota</taxon>
        <taxon>Betaproteobacteria</taxon>
        <taxon>Burkholderiales</taxon>
        <taxon>Burkholderiaceae</taxon>
        <taxon>Burkholderia</taxon>
        <taxon>Burkholderia cepacia complex</taxon>
    </lineage>
</organism>